<accession>Q8S8U6</accession>
<name>NU6C_ATRBE</name>
<evidence type="ECO:0000250" key="1"/>
<evidence type="ECO:0000255" key="2"/>
<evidence type="ECO:0000305" key="3"/>
<feature type="chain" id="PRO_0000360229" description="NAD(P)H-quinone oxidoreductase subunit 6, chloroplastic">
    <location>
        <begin position="1"/>
        <end position="176"/>
    </location>
</feature>
<feature type="transmembrane region" description="Helical" evidence="2">
    <location>
        <begin position="10"/>
        <end position="30"/>
    </location>
</feature>
<feature type="transmembrane region" description="Helical" evidence="2">
    <location>
        <begin position="32"/>
        <end position="52"/>
    </location>
</feature>
<feature type="transmembrane region" description="Helical" evidence="2">
    <location>
        <begin position="61"/>
        <end position="81"/>
    </location>
</feature>
<feature type="transmembrane region" description="Helical" evidence="2">
    <location>
        <begin position="92"/>
        <end position="112"/>
    </location>
</feature>
<feature type="transmembrane region" description="Helical" evidence="2">
    <location>
        <begin position="152"/>
        <end position="172"/>
    </location>
</feature>
<protein>
    <recommendedName>
        <fullName>NAD(P)H-quinone oxidoreductase subunit 6, chloroplastic</fullName>
        <ecNumber>7.1.1.-</ecNumber>
    </recommendedName>
    <alternativeName>
        <fullName>NAD(P)H dehydrogenase subunit 6</fullName>
    </alternativeName>
    <alternativeName>
        <fullName>NADH-plastoquinone oxidoreductase subunit 6</fullName>
    </alternativeName>
</protein>
<proteinExistence type="inferred from homology"/>
<dbReference type="EC" id="7.1.1.-"/>
<dbReference type="EMBL" id="AJ316582">
    <property type="protein sequence ID" value="CAC88099.1"/>
    <property type="molecule type" value="Genomic_DNA"/>
</dbReference>
<dbReference type="RefSeq" id="NP_783285.1">
    <property type="nucleotide sequence ID" value="NC_004561.1"/>
</dbReference>
<dbReference type="SMR" id="Q8S8U6"/>
<dbReference type="GeneID" id="806493"/>
<dbReference type="GO" id="GO:0009535">
    <property type="term" value="C:chloroplast thylakoid membrane"/>
    <property type="evidence" value="ECO:0007669"/>
    <property type="project" value="UniProtKB-SubCell"/>
</dbReference>
<dbReference type="GO" id="GO:0008137">
    <property type="term" value="F:NADH dehydrogenase (ubiquinone) activity"/>
    <property type="evidence" value="ECO:0007669"/>
    <property type="project" value="InterPro"/>
</dbReference>
<dbReference type="GO" id="GO:0048038">
    <property type="term" value="F:quinone binding"/>
    <property type="evidence" value="ECO:0007669"/>
    <property type="project" value="UniProtKB-KW"/>
</dbReference>
<dbReference type="FunFam" id="1.20.120.1200:FF:000002">
    <property type="entry name" value="NAD(P)H-quinone oxidoreductase subunit 6, chloroplastic"/>
    <property type="match status" value="1"/>
</dbReference>
<dbReference type="Gene3D" id="1.20.120.1200">
    <property type="entry name" value="NADH-ubiquinone/plastoquinone oxidoreductase chain 6, subunit NuoJ"/>
    <property type="match status" value="1"/>
</dbReference>
<dbReference type="InterPro" id="IPR050290">
    <property type="entry name" value="NAD(P)H-Q_Oxidoreduct_6"/>
</dbReference>
<dbReference type="InterPro" id="IPR001457">
    <property type="entry name" value="NADH_UbQ/plastoQ_OxRdtase_su6"/>
</dbReference>
<dbReference type="InterPro" id="IPR042106">
    <property type="entry name" value="Nuo/plastoQ_OxRdtase_6_NuoJ"/>
</dbReference>
<dbReference type="PANTHER" id="PTHR48479">
    <property type="entry name" value="NAD(P)H-QUINONE OXIDOREDUCTASE SUBUNIT 6, CHLOROPLASTIC"/>
    <property type="match status" value="1"/>
</dbReference>
<dbReference type="PANTHER" id="PTHR48479:SF1">
    <property type="entry name" value="NAD(P)H-QUINONE OXIDOREDUCTASE SUBUNIT 6, CHLOROPLASTIC"/>
    <property type="match status" value="1"/>
</dbReference>
<dbReference type="Pfam" id="PF00499">
    <property type="entry name" value="Oxidored_q3"/>
    <property type="match status" value="1"/>
</dbReference>
<organism>
    <name type="scientific">Atropa belladonna</name>
    <name type="common">Belladonna</name>
    <name type="synonym">Deadly nightshade</name>
    <dbReference type="NCBI Taxonomy" id="33113"/>
    <lineage>
        <taxon>Eukaryota</taxon>
        <taxon>Viridiplantae</taxon>
        <taxon>Streptophyta</taxon>
        <taxon>Embryophyta</taxon>
        <taxon>Tracheophyta</taxon>
        <taxon>Spermatophyta</taxon>
        <taxon>Magnoliopsida</taxon>
        <taxon>eudicotyledons</taxon>
        <taxon>Gunneridae</taxon>
        <taxon>Pentapetalae</taxon>
        <taxon>asterids</taxon>
        <taxon>lamiids</taxon>
        <taxon>Solanales</taxon>
        <taxon>Solanaceae</taxon>
        <taxon>Solanoideae</taxon>
        <taxon>Hyoscyameae</taxon>
        <taxon>Atropa</taxon>
    </lineage>
</organism>
<comment type="function">
    <text evidence="1">NDH shuttles electrons from NAD(P)H:plastoquinone, via FMN and iron-sulfur (Fe-S) centers, to quinones in the photosynthetic chain and possibly in a chloroplast respiratory chain. The immediate electron acceptor for the enzyme in this species is believed to be plastoquinone. Couples the redox reaction to proton translocation, and thus conserves the redox energy in a proton gradient (By similarity).</text>
</comment>
<comment type="catalytic activity">
    <reaction>
        <text>a plastoquinone + NADH + (n+1) H(+)(in) = a plastoquinol + NAD(+) + n H(+)(out)</text>
        <dbReference type="Rhea" id="RHEA:42608"/>
        <dbReference type="Rhea" id="RHEA-COMP:9561"/>
        <dbReference type="Rhea" id="RHEA-COMP:9562"/>
        <dbReference type="ChEBI" id="CHEBI:15378"/>
        <dbReference type="ChEBI" id="CHEBI:17757"/>
        <dbReference type="ChEBI" id="CHEBI:57540"/>
        <dbReference type="ChEBI" id="CHEBI:57945"/>
        <dbReference type="ChEBI" id="CHEBI:62192"/>
    </reaction>
</comment>
<comment type="catalytic activity">
    <reaction>
        <text>a plastoquinone + NADPH + (n+1) H(+)(in) = a plastoquinol + NADP(+) + n H(+)(out)</text>
        <dbReference type="Rhea" id="RHEA:42612"/>
        <dbReference type="Rhea" id="RHEA-COMP:9561"/>
        <dbReference type="Rhea" id="RHEA-COMP:9562"/>
        <dbReference type="ChEBI" id="CHEBI:15378"/>
        <dbReference type="ChEBI" id="CHEBI:17757"/>
        <dbReference type="ChEBI" id="CHEBI:57783"/>
        <dbReference type="ChEBI" id="CHEBI:58349"/>
        <dbReference type="ChEBI" id="CHEBI:62192"/>
    </reaction>
</comment>
<comment type="subunit">
    <text evidence="1">NDH is composed of at least 16 different subunits, 5 of which are encoded in the nucleus.</text>
</comment>
<comment type="subcellular location">
    <subcellularLocation>
        <location evidence="1">Plastid</location>
        <location evidence="1">Chloroplast thylakoid membrane</location>
        <topology evidence="1">Multi-pass membrane protein</topology>
    </subcellularLocation>
</comment>
<comment type="similarity">
    <text evidence="3">Belongs to the complex I subunit 6 family.</text>
</comment>
<sequence>MDLSEPIHDFLLVFLGSGLILGGLGVVLLPNPIYSAFSLGLVLVCTSLFYILSNSYFVAAAQLLIYVGAINVLIIFAVMFMNGSEYYKDFHLWTVGDGITSMVCISLFISLITTISDTSWYGIIWTTRSNQIIEQDFLSNSQQIGIHLSTDFFLPFELISIILLDALIGAIAVARQ</sequence>
<keyword id="KW-0150">Chloroplast</keyword>
<keyword id="KW-0472">Membrane</keyword>
<keyword id="KW-0520">NAD</keyword>
<keyword id="KW-0521">NADP</keyword>
<keyword id="KW-0934">Plastid</keyword>
<keyword id="KW-0618">Plastoquinone</keyword>
<keyword id="KW-0874">Quinone</keyword>
<keyword id="KW-0793">Thylakoid</keyword>
<keyword id="KW-1278">Translocase</keyword>
<keyword id="KW-0812">Transmembrane</keyword>
<keyword id="KW-1133">Transmembrane helix</keyword>
<keyword id="KW-0813">Transport</keyword>
<gene>
    <name type="primary">ndhG</name>
</gene>
<reference key="1">
    <citation type="journal article" date="2002" name="Mol. Biol. Evol.">
        <title>The plastid chromosome of Atropa belladonna and its comparison with that of Nicotiana tabacum: the role of RNA editing in generating divergence in the process of plant speciation.</title>
        <authorList>
            <person name="Schmitz-Linneweber C."/>
            <person name="Regel R."/>
            <person name="Du T.G."/>
            <person name="Hupfer H."/>
            <person name="Herrmann R.G."/>
            <person name="Maier R.M."/>
        </authorList>
    </citation>
    <scope>NUCLEOTIDE SEQUENCE [LARGE SCALE GENOMIC DNA]</scope>
    <source>
        <strain>cv. Ab5p(kan)</strain>
    </source>
</reference>
<geneLocation type="chloroplast"/>